<feature type="chain" id="PRO_0000384782" description="Ribosome maturation factor RimP">
    <location>
        <begin position="1"/>
        <end position="159"/>
    </location>
</feature>
<organism>
    <name type="scientific">Streptococcus pneumoniae (strain 70585)</name>
    <dbReference type="NCBI Taxonomy" id="488221"/>
    <lineage>
        <taxon>Bacteria</taxon>
        <taxon>Bacillati</taxon>
        <taxon>Bacillota</taxon>
        <taxon>Bacilli</taxon>
        <taxon>Lactobacillales</taxon>
        <taxon>Streptococcaceae</taxon>
        <taxon>Streptococcus</taxon>
    </lineage>
</organism>
<keyword id="KW-0963">Cytoplasm</keyword>
<keyword id="KW-0690">Ribosome biogenesis</keyword>
<comment type="function">
    <text evidence="1">Required for maturation of 30S ribosomal subunits.</text>
</comment>
<comment type="subcellular location">
    <subcellularLocation>
        <location evidence="1">Cytoplasm</location>
    </subcellularLocation>
</comment>
<comment type="similarity">
    <text evidence="1">Belongs to the RimP family.</text>
</comment>
<comment type="sequence caution" evidence="2">
    <conflict type="erroneous initiation">
        <sequence resource="EMBL-CDS" id="ACO16707"/>
    </conflict>
</comment>
<dbReference type="EMBL" id="CP000918">
    <property type="protein sequence ID" value="ACO16707.1"/>
    <property type="status" value="ALT_INIT"/>
    <property type="molecule type" value="Genomic_DNA"/>
</dbReference>
<dbReference type="RefSeq" id="WP_001808916.1">
    <property type="nucleotide sequence ID" value="NC_012468.1"/>
</dbReference>
<dbReference type="SMR" id="C1C5S4"/>
<dbReference type="KEGG" id="snm:SP70585_0612"/>
<dbReference type="HOGENOM" id="CLU_070525_2_0_9"/>
<dbReference type="Proteomes" id="UP000002211">
    <property type="component" value="Chromosome"/>
</dbReference>
<dbReference type="GO" id="GO:0005829">
    <property type="term" value="C:cytosol"/>
    <property type="evidence" value="ECO:0007669"/>
    <property type="project" value="TreeGrafter"/>
</dbReference>
<dbReference type="GO" id="GO:0000028">
    <property type="term" value="P:ribosomal small subunit assembly"/>
    <property type="evidence" value="ECO:0007669"/>
    <property type="project" value="TreeGrafter"/>
</dbReference>
<dbReference type="GO" id="GO:0006412">
    <property type="term" value="P:translation"/>
    <property type="evidence" value="ECO:0007669"/>
    <property type="project" value="TreeGrafter"/>
</dbReference>
<dbReference type="CDD" id="cd01734">
    <property type="entry name" value="YlxS_C"/>
    <property type="match status" value="1"/>
</dbReference>
<dbReference type="Gene3D" id="2.30.30.180">
    <property type="entry name" value="Ribosome maturation factor RimP, C-terminal domain"/>
    <property type="match status" value="1"/>
</dbReference>
<dbReference type="Gene3D" id="3.30.300.70">
    <property type="entry name" value="RimP-like superfamily, N-terminal"/>
    <property type="match status" value="1"/>
</dbReference>
<dbReference type="HAMAP" id="MF_01077">
    <property type="entry name" value="RimP"/>
    <property type="match status" value="1"/>
</dbReference>
<dbReference type="InterPro" id="IPR003728">
    <property type="entry name" value="Ribosome_maturation_RimP"/>
</dbReference>
<dbReference type="InterPro" id="IPR028998">
    <property type="entry name" value="RimP_C"/>
</dbReference>
<dbReference type="InterPro" id="IPR036847">
    <property type="entry name" value="RimP_C_sf"/>
</dbReference>
<dbReference type="InterPro" id="IPR028989">
    <property type="entry name" value="RimP_N"/>
</dbReference>
<dbReference type="InterPro" id="IPR035956">
    <property type="entry name" value="RimP_N_sf"/>
</dbReference>
<dbReference type="NCBIfam" id="NF000928">
    <property type="entry name" value="PRK00092.1-2"/>
    <property type="match status" value="1"/>
</dbReference>
<dbReference type="PANTHER" id="PTHR33867">
    <property type="entry name" value="RIBOSOME MATURATION FACTOR RIMP"/>
    <property type="match status" value="1"/>
</dbReference>
<dbReference type="PANTHER" id="PTHR33867:SF1">
    <property type="entry name" value="RIBOSOME MATURATION FACTOR RIMP"/>
    <property type="match status" value="1"/>
</dbReference>
<dbReference type="Pfam" id="PF17384">
    <property type="entry name" value="DUF150_C"/>
    <property type="match status" value="1"/>
</dbReference>
<dbReference type="Pfam" id="PF02576">
    <property type="entry name" value="RimP_N"/>
    <property type="match status" value="1"/>
</dbReference>
<dbReference type="SUPFAM" id="SSF74942">
    <property type="entry name" value="YhbC-like, C-terminal domain"/>
    <property type="match status" value="1"/>
</dbReference>
<dbReference type="SUPFAM" id="SSF75420">
    <property type="entry name" value="YhbC-like, N-terminal domain"/>
    <property type="match status" value="1"/>
</dbReference>
<sequence>MDAIATIVELVREVVEPVIEAPFELVDIEYGKIGSDMILSIFVDKPEGITLNDTADLTEMISPVLDTIKPDPFPEQYFLEITSPGLERPLKTKDAVAGAVGKYIHVGLYQAIDKQKVFEGTLLAFEEDELTMEYMDKTRKKTVQIPYSLVSKARLAVKL</sequence>
<accession>C1C5S4</accession>
<gene>
    <name evidence="1" type="primary">rimP</name>
    <name type="ordered locus">SP70585_0612</name>
</gene>
<evidence type="ECO:0000255" key="1">
    <source>
        <dbReference type="HAMAP-Rule" id="MF_01077"/>
    </source>
</evidence>
<evidence type="ECO:0000305" key="2"/>
<proteinExistence type="inferred from homology"/>
<name>RIMP_STRP7</name>
<reference key="1">
    <citation type="journal article" date="2010" name="Genome Biol.">
        <title>Structure and dynamics of the pan-genome of Streptococcus pneumoniae and closely related species.</title>
        <authorList>
            <person name="Donati C."/>
            <person name="Hiller N.L."/>
            <person name="Tettelin H."/>
            <person name="Muzzi A."/>
            <person name="Croucher N.J."/>
            <person name="Angiuoli S.V."/>
            <person name="Oggioni M."/>
            <person name="Dunning Hotopp J.C."/>
            <person name="Hu F.Z."/>
            <person name="Riley D.R."/>
            <person name="Covacci A."/>
            <person name="Mitchell T.J."/>
            <person name="Bentley S.D."/>
            <person name="Kilian M."/>
            <person name="Ehrlich G.D."/>
            <person name="Rappuoli R."/>
            <person name="Moxon E.R."/>
            <person name="Masignani V."/>
        </authorList>
    </citation>
    <scope>NUCLEOTIDE SEQUENCE [LARGE SCALE GENOMIC DNA]</scope>
    <source>
        <strain>70585</strain>
    </source>
</reference>
<protein>
    <recommendedName>
        <fullName evidence="1">Ribosome maturation factor RimP</fullName>
    </recommendedName>
</protein>